<comment type="function">
    <text evidence="1">Provides the (R)-glutamate required for cell wall biosynthesis.</text>
</comment>
<comment type="catalytic activity">
    <reaction evidence="1">
        <text>L-glutamate = D-glutamate</text>
        <dbReference type="Rhea" id="RHEA:12813"/>
        <dbReference type="ChEBI" id="CHEBI:29985"/>
        <dbReference type="ChEBI" id="CHEBI:29986"/>
        <dbReference type="EC" id="5.1.1.3"/>
    </reaction>
</comment>
<comment type="pathway">
    <text evidence="1">Cell wall biogenesis; peptidoglycan biosynthesis.</text>
</comment>
<comment type="similarity">
    <text evidence="1">Belongs to the aspartate/glutamate racemases family.</text>
</comment>
<accession>B1I4X2</accession>
<feature type="chain" id="PRO_1000114040" description="Glutamate racemase">
    <location>
        <begin position="1"/>
        <end position="273"/>
    </location>
</feature>
<feature type="active site" description="Proton donor/acceptor" evidence="1">
    <location>
        <position position="73"/>
    </location>
</feature>
<feature type="active site" description="Proton donor/acceptor" evidence="1">
    <location>
        <position position="184"/>
    </location>
</feature>
<feature type="binding site" evidence="1">
    <location>
        <begin position="10"/>
        <end position="11"/>
    </location>
    <ligand>
        <name>substrate</name>
    </ligand>
</feature>
<feature type="binding site" evidence="1">
    <location>
        <begin position="42"/>
        <end position="43"/>
    </location>
    <ligand>
        <name>substrate</name>
    </ligand>
</feature>
<feature type="binding site" evidence="1">
    <location>
        <begin position="74"/>
        <end position="75"/>
    </location>
    <ligand>
        <name>substrate</name>
    </ligand>
</feature>
<feature type="binding site" evidence="1">
    <location>
        <begin position="185"/>
        <end position="186"/>
    </location>
    <ligand>
        <name>substrate</name>
    </ligand>
</feature>
<evidence type="ECO:0000255" key="1">
    <source>
        <dbReference type="HAMAP-Rule" id="MF_00258"/>
    </source>
</evidence>
<dbReference type="EC" id="5.1.1.3" evidence="1"/>
<dbReference type="EMBL" id="CP000860">
    <property type="protein sequence ID" value="ACA60014.1"/>
    <property type="molecule type" value="Genomic_DNA"/>
</dbReference>
<dbReference type="RefSeq" id="WP_012302596.1">
    <property type="nucleotide sequence ID" value="NC_010424.1"/>
</dbReference>
<dbReference type="SMR" id="B1I4X2"/>
<dbReference type="STRING" id="477974.Daud_1508"/>
<dbReference type="KEGG" id="dau:Daud_1508"/>
<dbReference type="eggNOG" id="COG0796">
    <property type="taxonomic scope" value="Bacteria"/>
</dbReference>
<dbReference type="HOGENOM" id="CLU_052344_0_2_9"/>
<dbReference type="OrthoDB" id="9801055at2"/>
<dbReference type="UniPathway" id="UPA00219"/>
<dbReference type="Proteomes" id="UP000008544">
    <property type="component" value="Chromosome"/>
</dbReference>
<dbReference type="GO" id="GO:0008881">
    <property type="term" value="F:glutamate racemase activity"/>
    <property type="evidence" value="ECO:0007669"/>
    <property type="project" value="UniProtKB-UniRule"/>
</dbReference>
<dbReference type="GO" id="GO:0071555">
    <property type="term" value="P:cell wall organization"/>
    <property type="evidence" value="ECO:0007669"/>
    <property type="project" value="UniProtKB-KW"/>
</dbReference>
<dbReference type="GO" id="GO:0009252">
    <property type="term" value="P:peptidoglycan biosynthetic process"/>
    <property type="evidence" value="ECO:0007669"/>
    <property type="project" value="UniProtKB-UniRule"/>
</dbReference>
<dbReference type="GO" id="GO:0008360">
    <property type="term" value="P:regulation of cell shape"/>
    <property type="evidence" value="ECO:0007669"/>
    <property type="project" value="UniProtKB-KW"/>
</dbReference>
<dbReference type="FunFam" id="3.40.50.1860:FF:000001">
    <property type="entry name" value="Glutamate racemase"/>
    <property type="match status" value="1"/>
</dbReference>
<dbReference type="Gene3D" id="3.40.50.1860">
    <property type="match status" value="2"/>
</dbReference>
<dbReference type="HAMAP" id="MF_00258">
    <property type="entry name" value="Glu_racemase"/>
    <property type="match status" value="1"/>
</dbReference>
<dbReference type="InterPro" id="IPR015942">
    <property type="entry name" value="Asp/Glu/hydantoin_racemase"/>
</dbReference>
<dbReference type="InterPro" id="IPR001920">
    <property type="entry name" value="Asp/Glu_race"/>
</dbReference>
<dbReference type="InterPro" id="IPR033134">
    <property type="entry name" value="Asp/Glu_racemase_AS_2"/>
</dbReference>
<dbReference type="InterPro" id="IPR004391">
    <property type="entry name" value="Glu_race"/>
</dbReference>
<dbReference type="NCBIfam" id="TIGR00067">
    <property type="entry name" value="glut_race"/>
    <property type="match status" value="1"/>
</dbReference>
<dbReference type="PANTHER" id="PTHR21198">
    <property type="entry name" value="GLUTAMATE RACEMASE"/>
    <property type="match status" value="1"/>
</dbReference>
<dbReference type="PANTHER" id="PTHR21198:SF2">
    <property type="entry name" value="GLUTAMATE RACEMASE"/>
    <property type="match status" value="1"/>
</dbReference>
<dbReference type="Pfam" id="PF01177">
    <property type="entry name" value="Asp_Glu_race"/>
    <property type="match status" value="1"/>
</dbReference>
<dbReference type="SUPFAM" id="SSF53681">
    <property type="entry name" value="Aspartate/glutamate racemase"/>
    <property type="match status" value="2"/>
</dbReference>
<dbReference type="PROSITE" id="PS00924">
    <property type="entry name" value="ASP_GLU_RACEMASE_2"/>
    <property type="match status" value="1"/>
</dbReference>
<sequence>MAKGTVGLFDSGVGGLTVVREVSVILPGKRVIYFGDTAHVPYGDKSVDELLSYAERIIGFLCSQGADYIIFACNTSSAVSLRLMRDRFQVPMIGLIEPGAAEAVRLSATGRIGLIATEATVKAGAYARAVSALNRNCQVFSQAAPRLVPLVESGESDTPKAEQAVREYLEPLREQGIDTLILGCTHYPFLRDVIERVLGPEVVLVDPAAATVRAARLDMLRRGFSADNPGAQGEQDTVSLRYFVSGSADAFRAVAGQFLGREPEPVTEICLLR</sequence>
<reference key="1">
    <citation type="submission" date="2007-10" db="EMBL/GenBank/DDBJ databases">
        <title>Complete sequence of chromosome of Desulforudis audaxviator MP104C.</title>
        <authorList>
            <person name="Copeland A."/>
            <person name="Lucas S."/>
            <person name="Lapidus A."/>
            <person name="Barry K."/>
            <person name="Glavina del Rio T."/>
            <person name="Dalin E."/>
            <person name="Tice H."/>
            <person name="Bruce D."/>
            <person name="Pitluck S."/>
            <person name="Lowry S.R."/>
            <person name="Larimer F."/>
            <person name="Land M.L."/>
            <person name="Hauser L."/>
            <person name="Kyrpides N."/>
            <person name="Ivanova N.N."/>
            <person name="Richardson P."/>
        </authorList>
    </citation>
    <scope>NUCLEOTIDE SEQUENCE [LARGE SCALE GENOMIC DNA]</scope>
    <source>
        <strain>MP104C</strain>
    </source>
</reference>
<organism>
    <name type="scientific">Desulforudis audaxviator (strain MP104C)</name>
    <dbReference type="NCBI Taxonomy" id="477974"/>
    <lineage>
        <taxon>Bacteria</taxon>
        <taxon>Bacillati</taxon>
        <taxon>Bacillota</taxon>
        <taxon>Clostridia</taxon>
        <taxon>Thermoanaerobacterales</taxon>
        <taxon>Candidatus Desulforudaceae</taxon>
        <taxon>Candidatus Desulforudis</taxon>
    </lineage>
</organism>
<protein>
    <recommendedName>
        <fullName evidence="1">Glutamate racemase</fullName>
        <ecNumber evidence="1">5.1.1.3</ecNumber>
    </recommendedName>
</protein>
<keyword id="KW-0133">Cell shape</keyword>
<keyword id="KW-0961">Cell wall biogenesis/degradation</keyword>
<keyword id="KW-0413">Isomerase</keyword>
<keyword id="KW-0573">Peptidoglycan synthesis</keyword>
<keyword id="KW-1185">Reference proteome</keyword>
<gene>
    <name evidence="1" type="primary">murI</name>
    <name type="ordered locus">Daud_1508</name>
</gene>
<proteinExistence type="inferred from homology"/>
<name>MURI_DESAP</name>